<comment type="function">
    <text evidence="1">Single strand-specific metallo-endoribonuclease involved in late-stage 70S ribosome quality control and in maturation of the 3' terminus of the 16S rRNA.</text>
</comment>
<comment type="cofactor">
    <cofactor evidence="1">
        <name>Zn(2+)</name>
        <dbReference type="ChEBI" id="CHEBI:29105"/>
    </cofactor>
    <text evidence="1">Binds 1 zinc ion.</text>
</comment>
<comment type="subcellular location">
    <subcellularLocation>
        <location evidence="1">Cytoplasm</location>
    </subcellularLocation>
</comment>
<comment type="similarity">
    <text evidence="1">Belongs to the endoribonuclease YbeY family.</text>
</comment>
<protein>
    <recommendedName>
        <fullName evidence="1">Endoribonuclease YbeY</fullName>
        <ecNumber evidence="1">3.1.-.-</ecNumber>
    </recommendedName>
</protein>
<gene>
    <name evidence="1" type="primary">ybeY</name>
    <name type="ordered locus">Shew185_3305</name>
</gene>
<evidence type="ECO:0000255" key="1">
    <source>
        <dbReference type="HAMAP-Rule" id="MF_00009"/>
    </source>
</evidence>
<organism>
    <name type="scientific">Shewanella baltica (strain OS185)</name>
    <dbReference type="NCBI Taxonomy" id="402882"/>
    <lineage>
        <taxon>Bacteria</taxon>
        <taxon>Pseudomonadati</taxon>
        <taxon>Pseudomonadota</taxon>
        <taxon>Gammaproteobacteria</taxon>
        <taxon>Alteromonadales</taxon>
        <taxon>Shewanellaceae</taxon>
        <taxon>Shewanella</taxon>
    </lineage>
</organism>
<sequence>MSLDLALDIQHATTCDWLPTDEQFALWVTTAIGNSMNEAELTIRIVDSRESQMLNSTYRGKDKPTNVLSFPFEAPPEIELPLLGDLVICAAVVENEAREQQKTLEAHWAHMVVHGCLHLLGYDHIEDEEAEEMESLETQLIEGLGFTDPYKEQ</sequence>
<proteinExistence type="inferred from homology"/>
<name>YBEY_SHEB8</name>
<reference key="1">
    <citation type="submission" date="2007-07" db="EMBL/GenBank/DDBJ databases">
        <title>Complete sequence of chromosome of Shewanella baltica OS185.</title>
        <authorList>
            <consortium name="US DOE Joint Genome Institute"/>
            <person name="Copeland A."/>
            <person name="Lucas S."/>
            <person name="Lapidus A."/>
            <person name="Barry K."/>
            <person name="Glavina del Rio T."/>
            <person name="Dalin E."/>
            <person name="Tice H."/>
            <person name="Pitluck S."/>
            <person name="Sims D."/>
            <person name="Brettin T."/>
            <person name="Bruce D."/>
            <person name="Detter J.C."/>
            <person name="Han C."/>
            <person name="Schmutz J."/>
            <person name="Larimer F."/>
            <person name="Land M."/>
            <person name="Hauser L."/>
            <person name="Kyrpides N."/>
            <person name="Mikhailova N."/>
            <person name="Brettar I."/>
            <person name="Rodrigues J."/>
            <person name="Konstantinidis K."/>
            <person name="Tiedje J."/>
            <person name="Richardson P."/>
        </authorList>
    </citation>
    <scope>NUCLEOTIDE SEQUENCE [LARGE SCALE GENOMIC DNA]</scope>
    <source>
        <strain>OS185</strain>
    </source>
</reference>
<accession>A6WRJ3</accession>
<keyword id="KW-0963">Cytoplasm</keyword>
<keyword id="KW-0255">Endonuclease</keyword>
<keyword id="KW-0378">Hydrolase</keyword>
<keyword id="KW-0479">Metal-binding</keyword>
<keyword id="KW-0540">Nuclease</keyword>
<keyword id="KW-0690">Ribosome biogenesis</keyword>
<keyword id="KW-0698">rRNA processing</keyword>
<keyword id="KW-0862">Zinc</keyword>
<feature type="chain" id="PRO_1000000742" description="Endoribonuclease YbeY">
    <location>
        <begin position="1"/>
        <end position="153"/>
    </location>
</feature>
<feature type="binding site" evidence="1">
    <location>
        <position position="114"/>
    </location>
    <ligand>
        <name>Zn(2+)</name>
        <dbReference type="ChEBI" id="CHEBI:29105"/>
        <note>catalytic</note>
    </ligand>
</feature>
<feature type="binding site" evidence="1">
    <location>
        <position position="118"/>
    </location>
    <ligand>
        <name>Zn(2+)</name>
        <dbReference type="ChEBI" id="CHEBI:29105"/>
        <note>catalytic</note>
    </ligand>
</feature>
<feature type="binding site" evidence="1">
    <location>
        <position position="124"/>
    </location>
    <ligand>
        <name>Zn(2+)</name>
        <dbReference type="ChEBI" id="CHEBI:29105"/>
        <note>catalytic</note>
    </ligand>
</feature>
<dbReference type="EC" id="3.1.-.-" evidence="1"/>
<dbReference type="EMBL" id="CP000753">
    <property type="protein sequence ID" value="ABS09432.1"/>
    <property type="molecule type" value="Genomic_DNA"/>
</dbReference>
<dbReference type="RefSeq" id="WP_006082741.1">
    <property type="nucleotide sequence ID" value="NC_009665.1"/>
</dbReference>
<dbReference type="SMR" id="A6WRJ3"/>
<dbReference type="KEGG" id="sbm:Shew185_3305"/>
<dbReference type="HOGENOM" id="CLU_106710_0_1_6"/>
<dbReference type="GO" id="GO:0005737">
    <property type="term" value="C:cytoplasm"/>
    <property type="evidence" value="ECO:0007669"/>
    <property type="project" value="UniProtKB-SubCell"/>
</dbReference>
<dbReference type="GO" id="GO:0004222">
    <property type="term" value="F:metalloendopeptidase activity"/>
    <property type="evidence" value="ECO:0007669"/>
    <property type="project" value="InterPro"/>
</dbReference>
<dbReference type="GO" id="GO:0004521">
    <property type="term" value="F:RNA endonuclease activity"/>
    <property type="evidence" value="ECO:0007669"/>
    <property type="project" value="UniProtKB-UniRule"/>
</dbReference>
<dbReference type="GO" id="GO:0008270">
    <property type="term" value="F:zinc ion binding"/>
    <property type="evidence" value="ECO:0007669"/>
    <property type="project" value="UniProtKB-UniRule"/>
</dbReference>
<dbReference type="GO" id="GO:0006364">
    <property type="term" value="P:rRNA processing"/>
    <property type="evidence" value="ECO:0007669"/>
    <property type="project" value="UniProtKB-UniRule"/>
</dbReference>
<dbReference type="Gene3D" id="3.40.390.30">
    <property type="entry name" value="Metalloproteases ('zincins'), catalytic domain"/>
    <property type="match status" value="1"/>
</dbReference>
<dbReference type="HAMAP" id="MF_00009">
    <property type="entry name" value="Endoribonucl_YbeY"/>
    <property type="match status" value="1"/>
</dbReference>
<dbReference type="InterPro" id="IPR023091">
    <property type="entry name" value="MetalPrtase_cat_dom_sf_prd"/>
</dbReference>
<dbReference type="InterPro" id="IPR002036">
    <property type="entry name" value="YbeY"/>
</dbReference>
<dbReference type="InterPro" id="IPR020549">
    <property type="entry name" value="YbeY_CS"/>
</dbReference>
<dbReference type="NCBIfam" id="TIGR00043">
    <property type="entry name" value="rRNA maturation RNase YbeY"/>
    <property type="match status" value="1"/>
</dbReference>
<dbReference type="PANTHER" id="PTHR46986">
    <property type="entry name" value="ENDORIBONUCLEASE YBEY, CHLOROPLASTIC"/>
    <property type="match status" value="1"/>
</dbReference>
<dbReference type="PANTHER" id="PTHR46986:SF1">
    <property type="entry name" value="ENDORIBONUCLEASE YBEY, CHLOROPLASTIC"/>
    <property type="match status" value="1"/>
</dbReference>
<dbReference type="Pfam" id="PF02130">
    <property type="entry name" value="YbeY"/>
    <property type="match status" value="1"/>
</dbReference>
<dbReference type="SUPFAM" id="SSF55486">
    <property type="entry name" value="Metalloproteases ('zincins'), catalytic domain"/>
    <property type="match status" value="1"/>
</dbReference>
<dbReference type="PROSITE" id="PS01306">
    <property type="entry name" value="UPF0054"/>
    <property type="match status" value="1"/>
</dbReference>